<dbReference type="EMBL" id="AC123825">
    <property type="status" value="NOT_ANNOTATED_CDS"/>
    <property type="molecule type" value="Genomic_DNA"/>
</dbReference>
<dbReference type="EMBL" id="AC147266">
    <property type="status" value="NOT_ANNOTATED_CDS"/>
    <property type="molecule type" value="Genomic_DNA"/>
</dbReference>
<dbReference type="EMBL" id="BC026845">
    <property type="protein sequence ID" value="AAH26845.1"/>
    <property type="molecule type" value="mRNA"/>
</dbReference>
<dbReference type="EMBL" id="BC023915">
    <property type="protein sequence ID" value="AAH23915.1"/>
    <property type="molecule type" value="mRNA"/>
</dbReference>
<dbReference type="CCDS" id="CCDS22765.1"/>
<dbReference type="RefSeq" id="NP_758492.2">
    <property type="nucleotide sequence ID" value="NM_172288.3"/>
</dbReference>
<dbReference type="SMR" id="Q8R0G9"/>
<dbReference type="BioGRID" id="231592">
    <property type="interactions" value="6"/>
</dbReference>
<dbReference type="ComplexPortal" id="CPX-4474">
    <property type="entry name" value="Nuclear pore complex"/>
</dbReference>
<dbReference type="FunCoup" id="Q8R0G9">
    <property type="interactions" value="4027"/>
</dbReference>
<dbReference type="IntAct" id="Q8R0G9">
    <property type="interactions" value="3"/>
</dbReference>
<dbReference type="MINT" id="Q8R0G9"/>
<dbReference type="STRING" id="10090.ENSMUSP00000048084"/>
<dbReference type="GlyGen" id="Q8R0G9">
    <property type="glycosylation" value="2 sites, 1 O-linked glycan (1 site)"/>
</dbReference>
<dbReference type="iPTMnet" id="Q8R0G9"/>
<dbReference type="PhosphoSitePlus" id="Q8R0G9"/>
<dbReference type="jPOST" id="Q8R0G9"/>
<dbReference type="PaxDb" id="10090-ENSMUSP00000048084"/>
<dbReference type="PeptideAtlas" id="Q8R0G9"/>
<dbReference type="ProteomicsDB" id="293773"/>
<dbReference type="Pumba" id="Q8R0G9"/>
<dbReference type="Antibodypedia" id="34676">
    <property type="antibodies" value="135 antibodies from 29 providers"/>
</dbReference>
<dbReference type="Ensembl" id="ENSMUST00000044795.8">
    <property type="protein sequence ID" value="ENSMUSP00000048084.8"/>
    <property type="gene ID" value="ENSMUSG00000039509.9"/>
</dbReference>
<dbReference type="GeneID" id="234865"/>
<dbReference type="KEGG" id="mmu:234865"/>
<dbReference type="UCSC" id="uc009nws.2">
    <property type="organism name" value="mouse"/>
</dbReference>
<dbReference type="AGR" id="MGI:2442620"/>
<dbReference type="CTD" id="55746"/>
<dbReference type="MGI" id="MGI:2442620">
    <property type="gene designation" value="Nup133"/>
</dbReference>
<dbReference type="VEuPathDB" id="HostDB:ENSMUSG00000039509"/>
<dbReference type="eggNOG" id="KOG4121">
    <property type="taxonomic scope" value="Eukaryota"/>
</dbReference>
<dbReference type="GeneTree" id="ENSGT00390000011529"/>
<dbReference type="HOGENOM" id="CLU_008593_0_0_1"/>
<dbReference type="InParanoid" id="Q8R0G9"/>
<dbReference type="OMA" id="TRKYEEY"/>
<dbReference type="OrthoDB" id="103454at2759"/>
<dbReference type="PhylomeDB" id="Q8R0G9"/>
<dbReference type="TreeFam" id="TF106141"/>
<dbReference type="Reactome" id="R-MMU-141444">
    <property type="pathway name" value="Amplification of signal from unattached kinetochores via a MAD2 inhibitory signal"/>
</dbReference>
<dbReference type="Reactome" id="R-MMU-159227">
    <property type="pathway name" value="Transport of the SLBP independent Mature mRNA"/>
</dbReference>
<dbReference type="Reactome" id="R-MMU-159230">
    <property type="pathway name" value="Transport of the SLBP Dependant Mature mRNA"/>
</dbReference>
<dbReference type="Reactome" id="R-MMU-159231">
    <property type="pathway name" value="Transport of Mature mRNA Derived from an Intronless Transcript"/>
</dbReference>
<dbReference type="Reactome" id="R-MMU-159236">
    <property type="pathway name" value="Transport of Mature mRNA derived from an Intron-Containing Transcript"/>
</dbReference>
<dbReference type="Reactome" id="R-MMU-170822">
    <property type="pathway name" value="Regulation of Glucokinase by Glucokinase Regulatory Protein"/>
</dbReference>
<dbReference type="Reactome" id="R-MMU-191859">
    <property type="pathway name" value="snRNP Assembly"/>
</dbReference>
<dbReference type="Reactome" id="R-MMU-2467813">
    <property type="pathway name" value="Separation of Sister Chromatids"/>
</dbReference>
<dbReference type="Reactome" id="R-MMU-2500257">
    <property type="pathway name" value="Resolution of Sister Chromatid Cohesion"/>
</dbReference>
<dbReference type="Reactome" id="R-MMU-3108214">
    <property type="pathway name" value="SUMOylation of DNA damage response and repair proteins"/>
</dbReference>
<dbReference type="Reactome" id="R-MMU-3232142">
    <property type="pathway name" value="SUMOylation of ubiquitinylation proteins"/>
</dbReference>
<dbReference type="Reactome" id="R-MMU-3301854">
    <property type="pathway name" value="Nuclear Pore Complex (NPC) Disassembly"/>
</dbReference>
<dbReference type="Reactome" id="R-MMU-3371453">
    <property type="pathway name" value="Regulation of HSF1-mediated heat shock response"/>
</dbReference>
<dbReference type="Reactome" id="R-MMU-4085377">
    <property type="pathway name" value="SUMOylation of SUMOylation proteins"/>
</dbReference>
<dbReference type="Reactome" id="R-MMU-4551638">
    <property type="pathway name" value="SUMOylation of chromatin organization proteins"/>
</dbReference>
<dbReference type="Reactome" id="R-MMU-4570464">
    <property type="pathway name" value="SUMOylation of RNA binding proteins"/>
</dbReference>
<dbReference type="Reactome" id="R-MMU-4615885">
    <property type="pathway name" value="SUMOylation of DNA replication proteins"/>
</dbReference>
<dbReference type="Reactome" id="R-MMU-5578749">
    <property type="pathway name" value="Transcriptional regulation by small RNAs"/>
</dbReference>
<dbReference type="Reactome" id="R-MMU-5663220">
    <property type="pathway name" value="RHO GTPases Activate Formins"/>
</dbReference>
<dbReference type="Reactome" id="R-MMU-68877">
    <property type="pathway name" value="Mitotic Prometaphase"/>
</dbReference>
<dbReference type="Reactome" id="R-MMU-9615933">
    <property type="pathway name" value="Postmitotic nuclear pore complex (NPC) reformation"/>
</dbReference>
<dbReference type="Reactome" id="R-MMU-9648025">
    <property type="pathway name" value="EML4 and NUDC in mitotic spindle formation"/>
</dbReference>
<dbReference type="BioGRID-ORCS" id="234865">
    <property type="hits" value="22 hits in 78 CRISPR screens"/>
</dbReference>
<dbReference type="ChiTaRS" id="Nup133">
    <property type="organism name" value="mouse"/>
</dbReference>
<dbReference type="PRO" id="PR:Q8R0G9"/>
<dbReference type="Proteomes" id="UP000000589">
    <property type="component" value="Chromosome 8"/>
</dbReference>
<dbReference type="RNAct" id="Q8R0G9">
    <property type="molecule type" value="protein"/>
</dbReference>
<dbReference type="Bgee" id="ENSMUSG00000039509">
    <property type="expression patterns" value="Expressed in floor plate of midbrain and 254 other cell types or tissues"/>
</dbReference>
<dbReference type="GO" id="GO:0000776">
    <property type="term" value="C:kinetochore"/>
    <property type="evidence" value="ECO:0007669"/>
    <property type="project" value="UniProtKB-KW"/>
</dbReference>
<dbReference type="GO" id="GO:0005635">
    <property type="term" value="C:nuclear envelope"/>
    <property type="evidence" value="ECO:0000266"/>
    <property type="project" value="ComplexPortal"/>
</dbReference>
<dbReference type="GO" id="GO:0031965">
    <property type="term" value="C:nuclear membrane"/>
    <property type="evidence" value="ECO:0007669"/>
    <property type="project" value="Ensembl"/>
</dbReference>
<dbReference type="GO" id="GO:0005643">
    <property type="term" value="C:nuclear pore"/>
    <property type="evidence" value="ECO:0000314"/>
    <property type="project" value="MGI"/>
</dbReference>
<dbReference type="GO" id="GO:0031080">
    <property type="term" value="C:nuclear pore outer ring"/>
    <property type="evidence" value="ECO:0000250"/>
    <property type="project" value="UniProtKB"/>
</dbReference>
<dbReference type="GO" id="GO:0017056">
    <property type="term" value="F:structural constituent of nuclear pore"/>
    <property type="evidence" value="ECO:0000250"/>
    <property type="project" value="UniProtKB"/>
</dbReference>
<dbReference type="GO" id="GO:0006406">
    <property type="term" value="P:mRNA export from nucleus"/>
    <property type="evidence" value="ECO:0000250"/>
    <property type="project" value="UniProtKB"/>
</dbReference>
<dbReference type="GO" id="GO:0072006">
    <property type="term" value="P:nephron development"/>
    <property type="evidence" value="ECO:0000250"/>
    <property type="project" value="UniProtKB"/>
</dbReference>
<dbReference type="GO" id="GO:0021915">
    <property type="term" value="P:neural tube development"/>
    <property type="evidence" value="ECO:0000315"/>
    <property type="project" value="MGI"/>
</dbReference>
<dbReference type="GO" id="GO:0022008">
    <property type="term" value="P:neurogenesis"/>
    <property type="evidence" value="ECO:0000315"/>
    <property type="project" value="MGI"/>
</dbReference>
<dbReference type="GO" id="GO:0006999">
    <property type="term" value="P:nuclear pore organization"/>
    <property type="evidence" value="ECO:0007669"/>
    <property type="project" value="Ensembl"/>
</dbReference>
<dbReference type="GO" id="GO:0006913">
    <property type="term" value="P:nucleocytoplasmic transport"/>
    <property type="evidence" value="ECO:0000303"/>
    <property type="project" value="ComplexPortal"/>
</dbReference>
<dbReference type="GO" id="GO:0048339">
    <property type="term" value="P:paraxial mesoderm development"/>
    <property type="evidence" value="ECO:0000315"/>
    <property type="project" value="MGI"/>
</dbReference>
<dbReference type="GO" id="GO:0015031">
    <property type="term" value="P:protein transport"/>
    <property type="evidence" value="ECO:0007669"/>
    <property type="project" value="UniProtKB-KW"/>
</dbReference>
<dbReference type="GO" id="GO:0061053">
    <property type="term" value="P:somite development"/>
    <property type="evidence" value="ECO:0000315"/>
    <property type="project" value="MGI"/>
</dbReference>
<dbReference type="FunFam" id="1.25.40.700:FF:000001">
    <property type="entry name" value="Nuclear pore complex protein"/>
    <property type="match status" value="1"/>
</dbReference>
<dbReference type="FunFam" id="1.20.58.1380:FF:000001">
    <property type="entry name" value="Nuclear pore complex protein Nup133"/>
    <property type="match status" value="1"/>
</dbReference>
<dbReference type="FunFam" id="2.130.10.10:FF:000238">
    <property type="entry name" value="Nuclear pore complex protein Nup133"/>
    <property type="match status" value="1"/>
</dbReference>
<dbReference type="Gene3D" id="1.20.58.1380">
    <property type="match status" value="1"/>
</dbReference>
<dbReference type="Gene3D" id="1.25.40.700">
    <property type="match status" value="1"/>
</dbReference>
<dbReference type="Gene3D" id="2.130.10.10">
    <property type="entry name" value="YVTN repeat-like/Quinoprotein amine dehydrogenase"/>
    <property type="match status" value="1"/>
</dbReference>
<dbReference type="InterPro" id="IPR007187">
    <property type="entry name" value="Nucleoporin_Nup133/Nup155_C"/>
</dbReference>
<dbReference type="InterPro" id="IPR037624">
    <property type="entry name" value="Nup133-like"/>
</dbReference>
<dbReference type="InterPro" id="IPR015943">
    <property type="entry name" value="WD40/YVTN_repeat-like_dom_sf"/>
</dbReference>
<dbReference type="PANTHER" id="PTHR13405">
    <property type="entry name" value="NUCLEAR PORE COMPLEX PROTEIN NUP133"/>
    <property type="match status" value="1"/>
</dbReference>
<dbReference type="PANTHER" id="PTHR13405:SF11">
    <property type="entry name" value="NUCLEAR PORE COMPLEX PROTEIN NUP133"/>
    <property type="match status" value="1"/>
</dbReference>
<dbReference type="Pfam" id="PF03177">
    <property type="entry name" value="Nucleoporin_C"/>
    <property type="match status" value="1"/>
</dbReference>
<dbReference type="SUPFAM" id="SSF117289">
    <property type="entry name" value="Nucleoporin domain"/>
    <property type="match status" value="1"/>
</dbReference>
<accession>Q8R0G9</accession>
<accession>E9QLJ8</accession>
<comment type="function">
    <text evidence="2">Involved in poly(A)+ RNA transport. Involved in nephrogenesis.</text>
</comment>
<comment type="subunit">
    <text evidence="1">Forms part of the Nup160 subcomplex in the nuclear pore which is composed of NUP160, NUP133, NUP107 and Nup96. This complex plays a role in RNA export and in tethering Nup98 and NUP153 to the nucleus (By similarity).</text>
</comment>
<comment type="subcellular location">
    <subcellularLocation>
        <location evidence="2">Nucleus</location>
        <location evidence="2">Nuclear pore complex</location>
    </subcellularLocation>
    <subcellularLocation>
        <location evidence="2">Chromosome</location>
        <location evidence="2">Centromere</location>
        <location evidence="2">Kinetochore</location>
    </subcellularLocation>
    <text evidence="2">Located on both the cytoplasmic and nuclear sides of the nuclear pore. During mitosis, localizes to the kinetochores.</text>
</comment>
<comment type="similarity">
    <text evidence="4">Belongs to the nucleoporin Nup133 family.</text>
</comment>
<feature type="chain" id="PRO_0000204839" description="Nuclear pore complex protein Nup133">
    <location>
        <begin position="1"/>
        <end position="1155"/>
    </location>
</feature>
<feature type="region of interest" description="Disordered" evidence="3">
    <location>
        <begin position="1"/>
        <end position="36"/>
    </location>
</feature>
<feature type="compositionally biased region" description="Low complexity" evidence="3">
    <location>
        <begin position="8"/>
        <end position="19"/>
    </location>
</feature>
<feature type="modified residue" description="N-acetylmethionine" evidence="2">
    <location>
        <position position="1"/>
    </location>
</feature>
<feature type="modified residue" description="Phosphoserine" evidence="2">
    <location>
        <position position="7"/>
    </location>
</feature>
<feature type="modified residue" description="Omega-N-methylarginine" evidence="8">
    <location>
        <position position="17"/>
    </location>
</feature>
<feature type="modified residue" description="Phosphoserine" evidence="2">
    <location>
        <position position="27"/>
    </location>
</feature>
<feature type="modified residue" description="Phosphothreonine" evidence="6">
    <location>
        <position position="28"/>
    </location>
</feature>
<feature type="modified residue" description="Omega-N-methylarginine" evidence="8">
    <location>
        <position position="30"/>
    </location>
</feature>
<feature type="modified residue" description="Omega-N-methylarginine" evidence="8">
    <location>
        <position position="34"/>
    </location>
</feature>
<feature type="modified residue" description="Phosphoserine" evidence="6">
    <location>
        <position position="37"/>
    </location>
</feature>
<feature type="modified residue" description="Phosphoserine" evidence="2">
    <location>
        <position position="40"/>
    </location>
</feature>
<feature type="modified residue" description="Phosphoserine" evidence="6">
    <location>
        <position position="44"/>
    </location>
</feature>
<feature type="modified residue" description="Phosphoserine" evidence="6">
    <location>
        <position position="49"/>
    </location>
</feature>
<feature type="modified residue" description="Phosphoserine" evidence="2">
    <location>
        <position position="71"/>
    </location>
</feature>
<feature type="modified residue" description="Phosphoserine" evidence="2">
    <location>
        <position position="130"/>
    </location>
</feature>
<feature type="modified residue" description="Phosphoserine" evidence="2">
    <location>
        <position position="479"/>
    </location>
</feature>
<feature type="modified residue" description="Phosphoserine" evidence="6">
    <location>
        <position position="488"/>
    </location>
</feature>
<feature type="modified residue" description="Phosphoserine" evidence="6">
    <location>
        <position position="492"/>
    </location>
</feature>
<feature type="modified residue" description="Phosphoserine" evidence="6">
    <location>
        <position position="500"/>
    </location>
</feature>
<feature type="modified residue" description="N6-acetyllysine" evidence="7">
    <location>
        <position position="786"/>
    </location>
</feature>
<feature type="modified residue" description="Phosphoserine" evidence="2">
    <location>
        <position position="1132"/>
    </location>
</feature>
<feature type="sequence conflict" description="In Ref. 2; AAH23915." evidence="4" ref="2">
    <original>V</original>
    <variation>E</variation>
    <location>
        <position position="214"/>
    </location>
</feature>
<feature type="sequence conflict" description="In Ref. 2; AAH23915/AAH26845." evidence="4" ref="2">
    <original>T</original>
    <variation>R</variation>
    <location>
        <position position="289"/>
    </location>
</feature>
<feature type="sequence conflict" description="In Ref. 2; AAH23915/AAH26845." evidence="4" ref="2">
    <original>T</original>
    <variation>I</variation>
    <location>
        <position position="473"/>
    </location>
</feature>
<sequence length="1155" mass="128620">MFPSVSSPRTPGPGTRRGPLVGIGPTSTPRASRRGLSLGSAVNSPVLFSPAGRRSSVSSRGTPTRIFPHHSISESVNYDVRVFGSSLPVKIMEALTMAEADEQLSVHVDEGGWACLVCTEKLLIWKIAVSPVTKLSVCKELQLPPSDFHGSADLVALSYAATSGEVHSVQAVSVMVATKEGSIRYWPSLAREDTYSDTCVDLGGEKMCRFLTAVQGGSFILSSVGSQLVRLIPESSGKIHQHVLPQGQGMLSGIGRRVSSLFGILSPTSDLMLASVLWDRGGSSFYTLTSSNISKWELDDSSEKQVHSWDVHRTLKESITDAVWGSESNYEAIKEGVNIQYLDLKQNCDGLLILAAAWHLGDSPCLVYYSVITVEDNGNQMSDAVTVEVTQYNPPFQSEDLIACRLMVPNFSSQMTYLYMENAVFVCSTGTGKFSLPQEKIVFDTQGDGILGAGSCAGVPILFSRNSGLVSVTPRENVSLLAEDLEESLTSSVGGRGSESMVFETTTKNETVAHEDKTKLLKAAFLQYCRKDLGRAQIMADELFSSHTDLDSDPELDKAVTQISVDLIDDYPASDPRWAESVPQEAPGLSNTSLIILHQLEDKMKAHCLLVDFLHQVGLFRRLSSYPIRGTPMSTRLLLCEHAEKLSAAITLKNHHSRLPDLVNSAILLALNKRECEVPNSLTPADVFFREVSQVDTICECLLEHEEQVLREVALVSQEWAEVAIDVNTVLKDMLQAATHYRLNKSSMYSQEEVLGKEPEYVPWTATSGPSGIRTAVMRQHGIILKMVYPQADSKLRNVVMEQLVALIDCFLDSYVSQLKSLEKSSDQERYSSLEVEYLQKRSELLSPLLTLGQYPWAASLAEKYCDFDILVQMCEQTDNQARLQRYMTQFADQNFSDFLFRWYLEKGKRGKLLSQPISQHGQLANFLQAHEHLSWLHEINSQELEKAHTTLLGLANMETRYFAKKKTLLGLSKLAALASDISEDRLQEKIEAMAEQERFLLHQETLPEQLLTERQLSLSAMPVLTAPQLISLYICDENRRANEYDFKKALDLLEYIDEEEDVSIDDLKLEILCRALQRDDWSGSDGKDDPIEVSKDSVFVKILQKLIKDGIQLSEYLPEVTDLLRAEQLGSLKSNSYFEFVLKANYEYYVQGQM</sequence>
<evidence type="ECO:0000250" key="1"/>
<evidence type="ECO:0000250" key="2">
    <source>
        <dbReference type="UniProtKB" id="Q8WUM0"/>
    </source>
</evidence>
<evidence type="ECO:0000256" key="3">
    <source>
        <dbReference type="SAM" id="MobiDB-lite"/>
    </source>
</evidence>
<evidence type="ECO:0000305" key="4"/>
<evidence type="ECO:0000312" key="5">
    <source>
        <dbReference type="EMBL" id="AAH26845.1"/>
    </source>
</evidence>
<evidence type="ECO:0007744" key="6">
    <source>
    </source>
</evidence>
<evidence type="ECO:0007744" key="7">
    <source>
    </source>
</evidence>
<evidence type="ECO:0007744" key="8">
    <source>
    </source>
</evidence>
<reference key="1">
    <citation type="journal article" date="2009" name="PLoS Biol.">
        <title>Lineage-specific biology revealed by a finished genome assembly of the mouse.</title>
        <authorList>
            <person name="Church D.M."/>
            <person name="Goodstadt L."/>
            <person name="Hillier L.W."/>
            <person name="Zody M.C."/>
            <person name="Goldstein S."/>
            <person name="She X."/>
            <person name="Bult C.J."/>
            <person name="Agarwala R."/>
            <person name="Cherry J.L."/>
            <person name="DiCuccio M."/>
            <person name="Hlavina W."/>
            <person name="Kapustin Y."/>
            <person name="Meric P."/>
            <person name="Maglott D."/>
            <person name="Birtle Z."/>
            <person name="Marques A.C."/>
            <person name="Graves T."/>
            <person name="Zhou S."/>
            <person name="Teague B."/>
            <person name="Potamousis K."/>
            <person name="Churas C."/>
            <person name="Place M."/>
            <person name="Herschleb J."/>
            <person name="Runnheim R."/>
            <person name="Forrest D."/>
            <person name="Amos-Landgraf J."/>
            <person name="Schwartz D.C."/>
            <person name="Cheng Z."/>
            <person name="Lindblad-Toh K."/>
            <person name="Eichler E.E."/>
            <person name="Ponting C.P."/>
        </authorList>
    </citation>
    <scope>NUCLEOTIDE SEQUENCE [LARGE SCALE GENOMIC DNA]</scope>
    <source>
        <strain>C57BL/6J</strain>
    </source>
</reference>
<reference key="2">
    <citation type="journal article" date="2004" name="Genome Res.">
        <title>The status, quality, and expansion of the NIH full-length cDNA project: the Mammalian Gene Collection (MGC).</title>
        <authorList>
            <consortium name="The MGC Project Team"/>
        </authorList>
    </citation>
    <scope>NUCLEOTIDE SEQUENCE [LARGE SCALE MRNA]</scope>
    <source>
        <tissue>Kidney</tissue>
        <tissue>Mammary gland</tissue>
    </source>
</reference>
<reference key="3">
    <citation type="journal article" date="2007" name="Proc. Natl. Acad. Sci. U.S.A.">
        <title>Large-scale phosphorylation analysis of mouse liver.</title>
        <authorList>
            <person name="Villen J."/>
            <person name="Beausoleil S.A."/>
            <person name="Gerber S.A."/>
            <person name="Gygi S.P."/>
        </authorList>
    </citation>
    <scope>IDENTIFICATION BY MASS SPECTROMETRY [LARGE SCALE ANALYSIS]</scope>
    <source>
        <tissue>Liver</tissue>
    </source>
</reference>
<reference key="4">
    <citation type="journal article" date="2010" name="Cell">
        <title>A tissue-specific atlas of mouse protein phosphorylation and expression.</title>
        <authorList>
            <person name="Huttlin E.L."/>
            <person name="Jedrychowski M.P."/>
            <person name="Elias J.E."/>
            <person name="Goswami T."/>
            <person name="Rad R."/>
            <person name="Beausoleil S.A."/>
            <person name="Villen J."/>
            <person name="Haas W."/>
            <person name="Sowa M.E."/>
            <person name="Gygi S.P."/>
        </authorList>
    </citation>
    <scope>PHOSPHORYLATION [LARGE SCALE ANALYSIS] AT THR-28; SER-37; SER-44; SER-49; SER-488; SER-492 AND SER-500</scope>
    <scope>IDENTIFICATION BY MASS SPECTROMETRY [LARGE SCALE ANALYSIS]</scope>
    <source>
        <tissue>Brain</tissue>
        <tissue>Brown adipose tissue</tissue>
        <tissue>Heart</tissue>
        <tissue>Kidney</tissue>
        <tissue>Lung</tissue>
        <tissue>Pancreas</tissue>
        <tissue>Spleen</tissue>
        <tissue>Testis</tissue>
    </source>
</reference>
<reference key="5">
    <citation type="journal article" date="2013" name="Mol. Cell">
        <title>SIRT5-mediated lysine desuccinylation impacts diverse metabolic pathways.</title>
        <authorList>
            <person name="Park J."/>
            <person name="Chen Y."/>
            <person name="Tishkoff D.X."/>
            <person name="Peng C."/>
            <person name="Tan M."/>
            <person name="Dai L."/>
            <person name="Xie Z."/>
            <person name="Zhang Y."/>
            <person name="Zwaans B.M."/>
            <person name="Skinner M.E."/>
            <person name="Lombard D.B."/>
            <person name="Zhao Y."/>
        </authorList>
    </citation>
    <scope>ACETYLATION [LARGE SCALE ANALYSIS] AT LYS-786</scope>
    <scope>IDENTIFICATION BY MASS SPECTROMETRY [LARGE SCALE ANALYSIS]</scope>
    <source>
        <tissue>Embryonic fibroblast</tissue>
    </source>
</reference>
<reference key="6">
    <citation type="journal article" date="2014" name="Mol. Cell. Proteomics">
        <title>Immunoaffinity enrichment and mass spectrometry analysis of protein methylation.</title>
        <authorList>
            <person name="Guo A."/>
            <person name="Gu H."/>
            <person name="Zhou J."/>
            <person name="Mulhern D."/>
            <person name="Wang Y."/>
            <person name="Lee K.A."/>
            <person name="Yang V."/>
            <person name="Aguiar M."/>
            <person name="Kornhauser J."/>
            <person name="Jia X."/>
            <person name="Ren J."/>
            <person name="Beausoleil S.A."/>
            <person name="Silva J.C."/>
            <person name="Vemulapalli V."/>
            <person name="Bedford M.T."/>
            <person name="Comb M.J."/>
        </authorList>
    </citation>
    <scope>METHYLATION [LARGE SCALE ANALYSIS] AT ARG-17; ARG-30 AND ARG-34</scope>
    <scope>IDENTIFICATION BY MASS SPECTROMETRY [LARGE SCALE ANALYSIS]</scope>
    <source>
        <tissue>Embryo</tissue>
    </source>
</reference>
<gene>
    <name type="primary">Nup133</name>
</gene>
<proteinExistence type="evidence at protein level"/>
<name>NU133_MOUSE</name>
<organism evidence="5">
    <name type="scientific">Mus musculus</name>
    <name type="common">Mouse</name>
    <dbReference type="NCBI Taxonomy" id="10090"/>
    <lineage>
        <taxon>Eukaryota</taxon>
        <taxon>Metazoa</taxon>
        <taxon>Chordata</taxon>
        <taxon>Craniata</taxon>
        <taxon>Vertebrata</taxon>
        <taxon>Euteleostomi</taxon>
        <taxon>Mammalia</taxon>
        <taxon>Eutheria</taxon>
        <taxon>Euarchontoglires</taxon>
        <taxon>Glires</taxon>
        <taxon>Rodentia</taxon>
        <taxon>Myomorpha</taxon>
        <taxon>Muroidea</taxon>
        <taxon>Muridae</taxon>
        <taxon>Murinae</taxon>
        <taxon>Mus</taxon>
        <taxon>Mus</taxon>
    </lineage>
</organism>
<protein>
    <recommendedName>
        <fullName>Nuclear pore complex protein Nup133</fullName>
    </recommendedName>
    <alternativeName>
        <fullName>133 kDa nucleoporin</fullName>
    </alternativeName>
    <alternativeName>
        <fullName>Nucleoporin Nup133</fullName>
    </alternativeName>
</protein>
<keyword id="KW-0007">Acetylation</keyword>
<keyword id="KW-0137">Centromere</keyword>
<keyword id="KW-0158">Chromosome</keyword>
<keyword id="KW-0995">Kinetochore</keyword>
<keyword id="KW-0488">Methylation</keyword>
<keyword id="KW-0509">mRNA transport</keyword>
<keyword id="KW-0906">Nuclear pore complex</keyword>
<keyword id="KW-0539">Nucleus</keyword>
<keyword id="KW-0597">Phosphoprotein</keyword>
<keyword id="KW-0653">Protein transport</keyword>
<keyword id="KW-1185">Reference proteome</keyword>
<keyword id="KW-0811">Translocation</keyword>
<keyword id="KW-0813">Transport</keyword>